<keyword id="KW-0002">3D-structure</keyword>
<keyword id="KW-0269">Exonuclease</keyword>
<keyword id="KW-0378">Hydrolase</keyword>
<keyword id="KW-0540">Nuclease</keyword>
<keyword id="KW-0539">Nucleus</keyword>
<keyword id="KW-1267">Proteomics identification</keyword>
<keyword id="KW-1185">Reference proteome</keyword>
<keyword id="KW-0690">Ribosome biogenesis</keyword>
<feature type="chain" id="PRO_0000084121" description="Interferon-stimulated 20 kDa exonuclease-like 2">
    <location>
        <begin position="1"/>
        <end position="353"/>
    </location>
</feature>
<feature type="domain" description="Exonuclease">
    <location>
        <begin position="178"/>
        <end position="353"/>
    </location>
</feature>
<feature type="region of interest" description="Disordered" evidence="1">
    <location>
        <begin position="1"/>
        <end position="93"/>
    </location>
</feature>
<feature type="region of interest" description="Disordered" evidence="1">
    <location>
        <begin position="125"/>
        <end position="172"/>
    </location>
</feature>
<feature type="compositionally biased region" description="Basic and acidic residues" evidence="1">
    <location>
        <begin position="14"/>
        <end position="23"/>
    </location>
</feature>
<feature type="compositionally biased region" description="Basic residues" evidence="1">
    <location>
        <begin position="24"/>
        <end position="35"/>
    </location>
</feature>
<feature type="compositionally biased region" description="Basic and acidic residues" evidence="1">
    <location>
        <begin position="54"/>
        <end position="63"/>
    </location>
</feature>
<feature type="compositionally biased region" description="Basic residues" evidence="1">
    <location>
        <begin position="135"/>
        <end position="151"/>
    </location>
</feature>
<feature type="compositionally biased region" description="Polar residues" evidence="1">
    <location>
        <begin position="152"/>
        <end position="172"/>
    </location>
</feature>
<feature type="sequence variant" id="VAR_038171" description="In dbSNP:rs3795737.">
    <original>N</original>
    <variation>S</variation>
    <location>
        <position position="130"/>
    </location>
</feature>
<feature type="strand" evidence="4">
    <location>
        <begin position="179"/>
        <end position="193"/>
    </location>
</feature>
<feature type="strand" evidence="4">
    <location>
        <begin position="195"/>
        <end position="204"/>
    </location>
</feature>
<feature type="strand" evidence="4">
    <location>
        <begin position="210"/>
        <end position="217"/>
    </location>
</feature>
<feature type="strand" evidence="4">
    <location>
        <begin position="222"/>
        <end position="224"/>
    </location>
</feature>
<feature type="helix" evidence="4">
    <location>
        <begin position="227"/>
        <end position="230"/>
    </location>
</feature>
<feature type="helix" evidence="4">
    <location>
        <begin position="234"/>
        <end position="237"/>
    </location>
</feature>
<feature type="helix" evidence="4">
    <location>
        <begin position="243"/>
        <end position="254"/>
    </location>
</feature>
<feature type="strand" evidence="4">
    <location>
        <begin position="257"/>
        <end position="263"/>
    </location>
</feature>
<feature type="helix" evidence="4">
    <location>
        <begin position="265"/>
        <end position="271"/>
    </location>
</feature>
<feature type="strand" evidence="4">
    <location>
        <begin position="280"/>
        <end position="282"/>
    </location>
</feature>
<feature type="helix" evidence="4">
    <location>
        <begin position="303"/>
        <end position="309"/>
    </location>
</feature>
<feature type="helix" evidence="4">
    <location>
        <begin position="324"/>
        <end position="336"/>
    </location>
</feature>
<feature type="helix" evidence="4">
    <location>
        <begin position="339"/>
        <end position="348"/>
    </location>
</feature>
<protein>
    <recommendedName>
        <fullName>Interferon-stimulated 20 kDa exonuclease-like 2</fullName>
        <ecNumber>3.1.-.-</ecNumber>
    </recommendedName>
</protein>
<accession>Q9H9L3</accession>
<accession>D3DVC6</accession>
<accession>Q64KA2</accession>
<proteinExistence type="evidence at protein level"/>
<gene>
    <name type="primary">ISG20L2</name>
    <name type="ORF">HSD-38</name>
    <name type="ORF">HSD38</name>
</gene>
<sequence length="353" mass="39154">MSTLLLNLDFGEPPPKKALEGNAKHRNFVKKRRLLERRGFLSKKNQPPSKAPKLHSEPSKKGETPTVDGTWKTPSFPKKKTAASSNGSGQPLDKKAAVSWLTPAPSKKADSVAAKVDLLGEFQSALPKINSHPTRSQKKSSQKKSSKKNHPQKNAPQNSTQAHSENKCSGASQKLPRKMVAIDCEMVGTGPKGHVSSLARCSIVNYNGDVLYDEYILPPCHIVDYRTRWSGIRKQHMVNATPFKIARGQILKILTGKIVVGHAIHNDFKALQYFHPKSLTRDTSHIPPLNRKADCPENATMSLKHLTKKLLNRDIQVGKSGHSSVEDAQATMELYKLVEVEWEEHLARNPPTD</sequence>
<organism>
    <name type="scientific">Homo sapiens</name>
    <name type="common">Human</name>
    <dbReference type="NCBI Taxonomy" id="9606"/>
    <lineage>
        <taxon>Eukaryota</taxon>
        <taxon>Metazoa</taxon>
        <taxon>Chordata</taxon>
        <taxon>Craniata</taxon>
        <taxon>Vertebrata</taxon>
        <taxon>Euteleostomi</taxon>
        <taxon>Mammalia</taxon>
        <taxon>Eutheria</taxon>
        <taxon>Euarchontoglires</taxon>
        <taxon>Primates</taxon>
        <taxon>Haplorrhini</taxon>
        <taxon>Catarrhini</taxon>
        <taxon>Hominidae</taxon>
        <taxon>Homo</taxon>
    </lineage>
</organism>
<name>I20L2_HUMAN</name>
<reference key="1">
    <citation type="submission" date="2003-09" db="EMBL/GenBank/DDBJ databases">
        <title>A new spermatogenesis-related gene.</title>
        <authorList>
            <person name="Yang C.B."/>
            <person name="Miao S.Y."/>
            <person name="Zhang X.D."/>
            <person name="Qiao Y."/>
            <person name="Liang G."/>
            <person name="Wang L.F."/>
        </authorList>
    </citation>
    <scope>NUCLEOTIDE SEQUENCE [LARGE SCALE MRNA]</scope>
    <source>
        <tissue>Testis</tissue>
    </source>
</reference>
<reference key="2">
    <citation type="journal article" date="2004" name="Nat. Genet.">
        <title>Complete sequencing and characterization of 21,243 full-length human cDNAs.</title>
        <authorList>
            <person name="Ota T."/>
            <person name="Suzuki Y."/>
            <person name="Nishikawa T."/>
            <person name="Otsuki T."/>
            <person name="Sugiyama T."/>
            <person name="Irie R."/>
            <person name="Wakamatsu A."/>
            <person name="Hayashi K."/>
            <person name="Sato H."/>
            <person name="Nagai K."/>
            <person name="Kimura K."/>
            <person name="Makita H."/>
            <person name="Sekine M."/>
            <person name="Obayashi M."/>
            <person name="Nishi T."/>
            <person name="Shibahara T."/>
            <person name="Tanaka T."/>
            <person name="Ishii S."/>
            <person name="Yamamoto J."/>
            <person name="Saito K."/>
            <person name="Kawai Y."/>
            <person name="Isono Y."/>
            <person name="Nakamura Y."/>
            <person name="Nagahari K."/>
            <person name="Murakami K."/>
            <person name="Yasuda T."/>
            <person name="Iwayanagi T."/>
            <person name="Wagatsuma M."/>
            <person name="Shiratori A."/>
            <person name="Sudo H."/>
            <person name="Hosoiri T."/>
            <person name="Kaku Y."/>
            <person name="Kodaira H."/>
            <person name="Kondo H."/>
            <person name="Sugawara M."/>
            <person name="Takahashi M."/>
            <person name="Kanda K."/>
            <person name="Yokoi T."/>
            <person name="Furuya T."/>
            <person name="Kikkawa E."/>
            <person name="Omura Y."/>
            <person name="Abe K."/>
            <person name="Kamihara K."/>
            <person name="Katsuta N."/>
            <person name="Sato K."/>
            <person name="Tanikawa M."/>
            <person name="Yamazaki M."/>
            <person name="Ninomiya K."/>
            <person name="Ishibashi T."/>
            <person name="Yamashita H."/>
            <person name="Murakawa K."/>
            <person name="Fujimori K."/>
            <person name="Tanai H."/>
            <person name="Kimata M."/>
            <person name="Watanabe M."/>
            <person name="Hiraoka S."/>
            <person name="Chiba Y."/>
            <person name="Ishida S."/>
            <person name="Ono Y."/>
            <person name="Takiguchi S."/>
            <person name="Watanabe S."/>
            <person name="Yosida M."/>
            <person name="Hotuta T."/>
            <person name="Kusano J."/>
            <person name="Kanehori K."/>
            <person name="Takahashi-Fujii A."/>
            <person name="Hara H."/>
            <person name="Tanase T.-O."/>
            <person name="Nomura Y."/>
            <person name="Togiya S."/>
            <person name="Komai F."/>
            <person name="Hara R."/>
            <person name="Takeuchi K."/>
            <person name="Arita M."/>
            <person name="Imose N."/>
            <person name="Musashino K."/>
            <person name="Yuuki H."/>
            <person name="Oshima A."/>
            <person name="Sasaki N."/>
            <person name="Aotsuka S."/>
            <person name="Yoshikawa Y."/>
            <person name="Matsunawa H."/>
            <person name="Ichihara T."/>
            <person name="Shiohata N."/>
            <person name="Sano S."/>
            <person name="Moriya S."/>
            <person name="Momiyama H."/>
            <person name="Satoh N."/>
            <person name="Takami S."/>
            <person name="Terashima Y."/>
            <person name="Suzuki O."/>
            <person name="Nakagawa S."/>
            <person name="Senoh A."/>
            <person name="Mizoguchi H."/>
            <person name="Goto Y."/>
            <person name="Shimizu F."/>
            <person name="Wakebe H."/>
            <person name="Hishigaki H."/>
            <person name="Watanabe T."/>
            <person name="Sugiyama A."/>
            <person name="Takemoto M."/>
            <person name="Kawakami B."/>
            <person name="Yamazaki M."/>
            <person name="Watanabe K."/>
            <person name="Kumagai A."/>
            <person name="Itakura S."/>
            <person name="Fukuzumi Y."/>
            <person name="Fujimori Y."/>
            <person name="Komiyama M."/>
            <person name="Tashiro H."/>
            <person name="Tanigami A."/>
            <person name="Fujiwara T."/>
            <person name="Ono T."/>
            <person name="Yamada K."/>
            <person name="Fujii Y."/>
            <person name="Ozaki K."/>
            <person name="Hirao M."/>
            <person name="Ohmori Y."/>
            <person name="Kawabata A."/>
            <person name="Hikiji T."/>
            <person name="Kobatake N."/>
            <person name="Inagaki H."/>
            <person name="Ikema Y."/>
            <person name="Okamoto S."/>
            <person name="Okitani R."/>
            <person name="Kawakami T."/>
            <person name="Noguchi S."/>
            <person name="Itoh T."/>
            <person name="Shigeta K."/>
            <person name="Senba T."/>
            <person name="Matsumura K."/>
            <person name="Nakajima Y."/>
            <person name="Mizuno T."/>
            <person name="Morinaga M."/>
            <person name="Sasaki M."/>
            <person name="Togashi T."/>
            <person name="Oyama M."/>
            <person name="Hata H."/>
            <person name="Watanabe M."/>
            <person name="Komatsu T."/>
            <person name="Mizushima-Sugano J."/>
            <person name="Satoh T."/>
            <person name="Shirai Y."/>
            <person name="Takahashi Y."/>
            <person name="Nakagawa K."/>
            <person name="Okumura K."/>
            <person name="Nagase T."/>
            <person name="Nomura N."/>
            <person name="Kikuchi H."/>
            <person name="Masuho Y."/>
            <person name="Yamashita R."/>
            <person name="Nakai K."/>
            <person name="Yada T."/>
            <person name="Nakamura Y."/>
            <person name="Ohara O."/>
            <person name="Isogai T."/>
            <person name="Sugano S."/>
        </authorList>
    </citation>
    <scope>NUCLEOTIDE SEQUENCE [LARGE SCALE MRNA]</scope>
</reference>
<reference key="3">
    <citation type="journal article" date="2006" name="Nature">
        <title>The DNA sequence and biological annotation of human chromosome 1.</title>
        <authorList>
            <person name="Gregory S.G."/>
            <person name="Barlow K.F."/>
            <person name="McLay K.E."/>
            <person name="Kaul R."/>
            <person name="Swarbreck D."/>
            <person name="Dunham A."/>
            <person name="Scott C.E."/>
            <person name="Howe K.L."/>
            <person name="Woodfine K."/>
            <person name="Spencer C.C.A."/>
            <person name="Jones M.C."/>
            <person name="Gillson C."/>
            <person name="Searle S."/>
            <person name="Zhou Y."/>
            <person name="Kokocinski F."/>
            <person name="McDonald L."/>
            <person name="Evans R."/>
            <person name="Phillips K."/>
            <person name="Atkinson A."/>
            <person name="Cooper R."/>
            <person name="Jones C."/>
            <person name="Hall R.E."/>
            <person name="Andrews T.D."/>
            <person name="Lloyd C."/>
            <person name="Ainscough R."/>
            <person name="Almeida J.P."/>
            <person name="Ambrose K.D."/>
            <person name="Anderson F."/>
            <person name="Andrew R.W."/>
            <person name="Ashwell R.I.S."/>
            <person name="Aubin K."/>
            <person name="Babbage A.K."/>
            <person name="Bagguley C.L."/>
            <person name="Bailey J."/>
            <person name="Beasley H."/>
            <person name="Bethel G."/>
            <person name="Bird C.P."/>
            <person name="Bray-Allen S."/>
            <person name="Brown J.Y."/>
            <person name="Brown A.J."/>
            <person name="Buckley D."/>
            <person name="Burton J."/>
            <person name="Bye J."/>
            <person name="Carder C."/>
            <person name="Chapman J.C."/>
            <person name="Clark S.Y."/>
            <person name="Clarke G."/>
            <person name="Clee C."/>
            <person name="Cobley V."/>
            <person name="Collier R.E."/>
            <person name="Corby N."/>
            <person name="Coville G.J."/>
            <person name="Davies J."/>
            <person name="Deadman R."/>
            <person name="Dunn M."/>
            <person name="Earthrowl M."/>
            <person name="Ellington A.G."/>
            <person name="Errington H."/>
            <person name="Frankish A."/>
            <person name="Frankland J."/>
            <person name="French L."/>
            <person name="Garner P."/>
            <person name="Garnett J."/>
            <person name="Gay L."/>
            <person name="Ghori M.R.J."/>
            <person name="Gibson R."/>
            <person name="Gilby L.M."/>
            <person name="Gillett W."/>
            <person name="Glithero R.J."/>
            <person name="Grafham D.V."/>
            <person name="Griffiths C."/>
            <person name="Griffiths-Jones S."/>
            <person name="Grocock R."/>
            <person name="Hammond S."/>
            <person name="Harrison E.S.I."/>
            <person name="Hart E."/>
            <person name="Haugen E."/>
            <person name="Heath P.D."/>
            <person name="Holmes S."/>
            <person name="Holt K."/>
            <person name="Howden P.J."/>
            <person name="Hunt A.R."/>
            <person name="Hunt S.E."/>
            <person name="Hunter G."/>
            <person name="Isherwood J."/>
            <person name="James R."/>
            <person name="Johnson C."/>
            <person name="Johnson D."/>
            <person name="Joy A."/>
            <person name="Kay M."/>
            <person name="Kershaw J.K."/>
            <person name="Kibukawa M."/>
            <person name="Kimberley A.M."/>
            <person name="King A."/>
            <person name="Knights A.J."/>
            <person name="Lad H."/>
            <person name="Laird G."/>
            <person name="Lawlor S."/>
            <person name="Leongamornlert D.A."/>
            <person name="Lloyd D.M."/>
            <person name="Loveland J."/>
            <person name="Lovell J."/>
            <person name="Lush M.J."/>
            <person name="Lyne R."/>
            <person name="Martin S."/>
            <person name="Mashreghi-Mohammadi M."/>
            <person name="Matthews L."/>
            <person name="Matthews N.S.W."/>
            <person name="McLaren S."/>
            <person name="Milne S."/>
            <person name="Mistry S."/>
            <person name="Moore M.J.F."/>
            <person name="Nickerson T."/>
            <person name="O'Dell C.N."/>
            <person name="Oliver K."/>
            <person name="Palmeiri A."/>
            <person name="Palmer S.A."/>
            <person name="Parker A."/>
            <person name="Patel D."/>
            <person name="Pearce A.V."/>
            <person name="Peck A.I."/>
            <person name="Pelan S."/>
            <person name="Phelps K."/>
            <person name="Phillimore B.J."/>
            <person name="Plumb R."/>
            <person name="Rajan J."/>
            <person name="Raymond C."/>
            <person name="Rouse G."/>
            <person name="Saenphimmachak C."/>
            <person name="Sehra H.K."/>
            <person name="Sheridan E."/>
            <person name="Shownkeen R."/>
            <person name="Sims S."/>
            <person name="Skuce C.D."/>
            <person name="Smith M."/>
            <person name="Steward C."/>
            <person name="Subramanian S."/>
            <person name="Sycamore N."/>
            <person name="Tracey A."/>
            <person name="Tromans A."/>
            <person name="Van Helmond Z."/>
            <person name="Wall M."/>
            <person name="Wallis J.M."/>
            <person name="White S."/>
            <person name="Whitehead S.L."/>
            <person name="Wilkinson J.E."/>
            <person name="Willey D.L."/>
            <person name="Williams H."/>
            <person name="Wilming L."/>
            <person name="Wray P.W."/>
            <person name="Wu Z."/>
            <person name="Coulson A."/>
            <person name="Vaudin M."/>
            <person name="Sulston J.E."/>
            <person name="Durbin R.M."/>
            <person name="Hubbard T."/>
            <person name="Wooster R."/>
            <person name="Dunham I."/>
            <person name="Carter N.P."/>
            <person name="McVean G."/>
            <person name="Ross M.T."/>
            <person name="Harrow J."/>
            <person name="Olson M.V."/>
            <person name="Beck S."/>
            <person name="Rogers J."/>
            <person name="Bentley D.R."/>
        </authorList>
    </citation>
    <scope>NUCLEOTIDE SEQUENCE [LARGE SCALE GENOMIC DNA]</scope>
</reference>
<reference key="4">
    <citation type="submission" date="2005-09" db="EMBL/GenBank/DDBJ databases">
        <authorList>
            <person name="Mural R.J."/>
            <person name="Istrail S."/>
            <person name="Sutton G.G."/>
            <person name="Florea L."/>
            <person name="Halpern A.L."/>
            <person name="Mobarry C.M."/>
            <person name="Lippert R."/>
            <person name="Walenz B."/>
            <person name="Shatkay H."/>
            <person name="Dew I."/>
            <person name="Miller J.R."/>
            <person name="Flanigan M.J."/>
            <person name="Edwards N.J."/>
            <person name="Bolanos R."/>
            <person name="Fasulo D."/>
            <person name="Halldorsson B.V."/>
            <person name="Hannenhalli S."/>
            <person name="Turner R."/>
            <person name="Yooseph S."/>
            <person name="Lu F."/>
            <person name="Nusskern D.R."/>
            <person name="Shue B.C."/>
            <person name="Zheng X.H."/>
            <person name="Zhong F."/>
            <person name="Delcher A.L."/>
            <person name="Huson D.H."/>
            <person name="Kravitz S.A."/>
            <person name="Mouchard L."/>
            <person name="Reinert K."/>
            <person name="Remington K.A."/>
            <person name="Clark A.G."/>
            <person name="Waterman M.S."/>
            <person name="Eichler E.E."/>
            <person name="Adams M.D."/>
            <person name="Hunkapiller M.W."/>
            <person name="Myers E.W."/>
            <person name="Venter J.C."/>
        </authorList>
    </citation>
    <scope>NUCLEOTIDE SEQUENCE [LARGE SCALE GENOMIC DNA]</scope>
</reference>
<reference key="5">
    <citation type="journal article" date="2004" name="Genome Res.">
        <title>The status, quality, and expansion of the NIH full-length cDNA project: the Mammalian Gene Collection (MGC).</title>
        <authorList>
            <consortium name="The MGC Project Team"/>
        </authorList>
    </citation>
    <scope>NUCLEOTIDE SEQUENCE [LARGE SCALE MRNA]</scope>
    <source>
        <tissue>Brain</tissue>
    </source>
</reference>
<reference key="6">
    <citation type="journal article" date="2002" name="Mol. Biol. Cell">
        <title>Functional proteomic analysis of human nucleolus.</title>
        <authorList>
            <person name="Scherl A."/>
            <person name="Coute Y."/>
            <person name="Deon C."/>
            <person name="Calle A."/>
            <person name="Kindbeiter K."/>
            <person name="Sanchez J.-C."/>
            <person name="Greco A."/>
            <person name="Hochstrasser D.F."/>
            <person name="Diaz J.-J."/>
        </authorList>
    </citation>
    <scope>SUBCELLULAR LOCATION [LARGE SCALE ANALYSIS]</scope>
    <source>
        <tissue>Cervix carcinoma</tissue>
    </source>
</reference>
<reference key="7">
    <citation type="journal article" date="2008" name="Mol. Cell. Proteomics">
        <title>ISG20L2, a novel vertebrate nucleolar exoribonuclease involved in ribosome biogenesis.</title>
        <authorList>
            <person name="Coute Y."/>
            <person name="Kindbeiter K."/>
            <person name="Belin S."/>
            <person name="Dieckmann R."/>
            <person name="Duret L."/>
            <person name="Bezin L."/>
            <person name="Sanchez J.-C."/>
            <person name="Diaz J.-J."/>
        </authorList>
    </citation>
    <scope>FUNCTION</scope>
    <scope>CATALYTIC ACTIVITY</scope>
    <scope>SUBCELLULAR LOCATION</scope>
</reference>
<reference key="8">
    <citation type="journal article" date="2011" name="BMC Syst. Biol.">
        <title>Initial characterization of the human central proteome.</title>
        <authorList>
            <person name="Burkard T.R."/>
            <person name="Planyavsky M."/>
            <person name="Kaupe I."/>
            <person name="Breitwieser F.P."/>
            <person name="Buerckstuemmer T."/>
            <person name="Bennett K.L."/>
            <person name="Superti-Furga G."/>
            <person name="Colinge J."/>
        </authorList>
    </citation>
    <scope>IDENTIFICATION BY MASS SPECTROMETRY [LARGE SCALE ANALYSIS]</scope>
</reference>
<comment type="function">
    <text evidence="3">3'-&gt; 5'-exoribonuclease involved in ribosome biogenesis in the processing of the 12S pre-rRNA. Displays a strong specificity for a 3'-end containing a free hydroxyl group.</text>
</comment>
<comment type="interaction">
    <interactant intactId="EBI-751335">
        <id>Q9H9L3</id>
    </interactant>
    <interactant intactId="EBI-751327">
        <id>O00423</id>
        <label>EML1</label>
    </interactant>
    <organismsDiffer>false</organismsDiffer>
    <experiments>3</experiments>
</comment>
<comment type="interaction">
    <interactant intactId="EBI-751335">
        <id>Q9H9L3</id>
    </interactant>
    <interactant intactId="EBI-389883">
        <id>P16333</id>
        <label>NCK1</label>
    </interactant>
    <organismsDiffer>false</organismsDiffer>
    <experiments>2</experiments>
</comment>
<comment type="subcellular location">
    <subcellularLocation>
        <location evidence="2 3">Nucleus</location>
        <location evidence="2 3">Nucleolus</location>
    </subcellularLocation>
</comment>
<evidence type="ECO:0000256" key="1">
    <source>
        <dbReference type="SAM" id="MobiDB-lite"/>
    </source>
</evidence>
<evidence type="ECO:0000269" key="2">
    <source>
    </source>
</evidence>
<evidence type="ECO:0000269" key="3">
    <source>
    </source>
</evidence>
<evidence type="ECO:0007829" key="4">
    <source>
        <dbReference type="PDB" id="7YW5"/>
    </source>
</evidence>
<dbReference type="EC" id="3.1.-.-"/>
<dbReference type="EMBL" id="AY391837">
    <property type="protein sequence ID" value="AAS55433.1"/>
    <property type="molecule type" value="mRNA"/>
</dbReference>
<dbReference type="EMBL" id="AK022733">
    <property type="protein sequence ID" value="BAB14212.1"/>
    <property type="molecule type" value="mRNA"/>
</dbReference>
<dbReference type="EMBL" id="AL590666">
    <property type="status" value="NOT_ANNOTATED_CDS"/>
    <property type="molecule type" value="Genomic_DNA"/>
</dbReference>
<dbReference type="EMBL" id="CH471121">
    <property type="protein sequence ID" value="EAW52919.1"/>
    <property type="molecule type" value="Genomic_DNA"/>
</dbReference>
<dbReference type="EMBL" id="CH471121">
    <property type="protein sequence ID" value="EAW52920.1"/>
    <property type="molecule type" value="Genomic_DNA"/>
</dbReference>
<dbReference type="EMBL" id="BC000575">
    <property type="protein sequence ID" value="AAH00575.1"/>
    <property type="molecule type" value="mRNA"/>
</dbReference>
<dbReference type="CCDS" id="CCDS1153.1"/>
<dbReference type="RefSeq" id="NP_001290024.1">
    <property type="nucleotide sequence ID" value="NM_001303095.1"/>
</dbReference>
<dbReference type="RefSeq" id="NP_001357079.1">
    <property type="nucleotide sequence ID" value="NM_001370150.2"/>
</dbReference>
<dbReference type="RefSeq" id="NP_001357080.1">
    <property type="nucleotide sequence ID" value="NM_001370151.1"/>
</dbReference>
<dbReference type="RefSeq" id="NP_001357081.1">
    <property type="nucleotide sequence ID" value="NM_001370152.1"/>
</dbReference>
<dbReference type="RefSeq" id="XP_005245573.1">
    <property type="nucleotide sequence ID" value="XM_005245516.4"/>
</dbReference>
<dbReference type="RefSeq" id="XP_006711623.1">
    <property type="nucleotide sequence ID" value="XM_006711560.3"/>
</dbReference>
<dbReference type="RefSeq" id="XP_006711624.1">
    <property type="nucleotide sequence ID" value="XM_006711561.3"/>
</dbReference>
<dbReference type="RefSeq" id="XP_047287294.1">
    <property type="nucleotide sequence ID" value="XM_047431338.1"/>
</dbReference>
<dbReference type="PDB" id="7YW5">
    <property type="method" value="X-ray"/>
    <property type="resolution" value="2.77 A"/>
    <property type="chains" value="A/B=160-353"/>
</dbReference>
<dbReference type="PDBsum" id="7YW5"/>
<dbReference type="SMR" id="Q9H9L3"/>
<dbReference type="BioGRID" id="123618">
    <property type="interactions" value="52"/>
</dbReference>
<dbReference type="FunCoup" id="Q9H9L3">
    <property type="interactions" value="3141"/>
</dbReference>
<dbReference type="IntAct" id="Q9H9L3">
    <property type="interactions" value="34"/>
</dbReference>
<dbReference type="MINT" id="Q9H9L3"/>
<dbReference type="STRING" id="9606.ENSP00000323424"/>
<dbReference type="iPTMnet" id="Q9H9L3"/>
<dbReference type="PhosphoSitePlus" id="Q9H9L3"/>
<dbReference type="SwissPalm" id="Q9H9L3"/>
<dbReference type="BioMuta" id="ISG20L2"/>
<dbReference type="DMDM" id="42559527"/>
<dbReference type="jPOST" id="Q9H9L3"/>
<dbReference type="MassIVE" id="Q9H9L3"/>
<dbReference type="PaxDb" id="9606-ENSP00000323424"/>
<dbReference type="PeptideAtlas" id="Q9H9L3"/>
<dbReference type="ProteomicsDB" id="81328"/>
<dbReference type="Pumba" id="Q9H9L3"/>
<dbReference type="Antibodypedia" id="20441">
    <property type="antibodies" value="41 antibodies from 19 providers"/>
</dbReference>
<dbReference type="DNASU" id="81875"/>
<dbReference type="Ensembl" id="ENST00000313146.11">
    <property type="protein sequence ID" value="ENSP00000323424.6"/>
    <property type="gene ID" value="ENSG00000143319.18"/>
</dbReference>
<dbReference type="Ensembl" id="ENST00000368219.2">
    <property type="protein sequence ID" value="ENSP00000357202.2"/>
    <property type="gene ID" value="ENSG00000143319.18"/>
</dbReference>
<dbReference type="GeneID" id="81875"/>
<dbReference type="KEGG" id="hsa:81875"/>
<dbReference type="MANE-Select" id="ENST00000368219.2">
    <property type="protein sequence ID" value="ENSP00000357202.2"/>
    <property type="RefSeq nucleotide sequence ID" value="NM_001370150.2"/>
    <property type="RefSeq protein sequence ID" value="NP_001357079.1"/>
</dbReference>
<dbReference type="UCSC" id="uc001fps.2">
    <property type="organism name" value="human"/>
</dbReference>
<dbReference type="AGR" id="HGNC:25745"/>
<dbReference type="CTD" id="81875"/>
<dbReference type="DisGeNET" id="81875"/>
<dbReference type="GeneCards" id="ISG20L2"/>
<dbReference type="HGNC" id="HGNC:25745">
    <property type="gene designation" value="ISG20L2"/>
</dbReference>
<dbReference type="HPA" id="ENSG00000143319">
    <property type="expression patterns" value="Tissue enriched (testis)"/>
</dbReference>
<dbReference type="MIM" id="611930">
    <property type="type" value="gene"/>
</dbReference>
<dbReference type="neXtProt" id="NX_Q9H9L3"/>
<dbReference type="OpenTargets" id="ENSG00000143319"/>
<dbReference type="PharmGKB" id="PA142671650"/>
<dbReference type="VEuPathDB" id="HostDB:ENSG00000143319"/>
<dbReference type="eggNOG" id="KOG2249">
    <property type="taxonomic scope" value="Eukaryota"/>
</dbReference>
<dbReference type="GeneTree" id="ENSGT00940000159724"/>
<dbReference type="HOGENOM" id="CLU_022453_0_0_1"/>
<dbReference type="InParanoid" id="Q9H9L3"/>
<dbReference type="OMA" id="PCPIVDY"/>
<dbReference type="OrthoDB" id="16516at2759"/>
<dbReference type="PAN-GO" id="Q9H9L3">
    <property type="GO annotations" value="2 GO annotations based on evolutionary models"/>
</dbReference>
<dbReference type="PhylomeDB" id="Q9H9L3"/>
<dbReference type="TreeFam" id="TF354340"/>
<dbReference type="PathwayCommons" id="Q9H9L3"/>
<dbReference type="Reactome" id="R-HSA-6791226">
    <property type="pathway name" value="Major pathway of rRNA processing in the nucleolus and cytosol"/>
</dbReference>
<dbReference type="SignaLink" id="Q9H9L3"/>
<dbReference type="BioGRID-ORCS" id="81875">
    <property type="hits" value="708 hits in 1152 CRISPR screens"/>
</dbReference>
<dbReference type="CD-CODE" id="91857CE7">
    <property type="entry name" value="Nucleolus"/>
</dbReference>
<dbReference type="ChiTaRS" id="ISG20L2">
    <property type="organism name" value="human"/>
</dbReference>
<dbReference type="GenomeRNAi" id="81875"/>
<dbReference type="Pharos" id="Q9H9L3">
    <property type="development level" value="Tdark"/>
</dbReference>
<dbReference type="PRO" id="PR:Q9H9L3"/>
<dbReference type="Proteomes" id="UP000005640">
    <property type="component" value="Chromosome 1"/>
</dbReference>
<dbReference type="RNAct" id="Q9H9L3">
    <property type="molecule type" value="protein"/>
</dbReference>
<dbReference type="Bgee" id="ENSG00000143319">
    <property type="expression patterns" value="Expressed in right testis and 199 other cell types or tissues"/>
</dbReference>
<dbReference type="GO" id="GO:0005730">
    <property type="term" value="C:nucleolus"/>
    <property type="evidence" value="ECO:0007669"/>
    <property type="project" value="UniProtKB-SubCell"/>
</dbReference>
<dbReference type="GO" id="GO:0005634">
    <property type="term" value="C:nucleus"/>
    <property type="evidence" value="ECO:0000318"/>
    <property type="project" value="GO_Central"/>
</dbReference>
<dbReference type="GO" id="GO:0000175">
    <property type="term" value="F:3'-5'-RNA exonuclease activity"/>
    <property type="evidence" value="ECO:0007669"/>
    <property type="project" value="InterPro"/>
</dbReference>
<dbReference type="GO" id="GO:0004527">
    <property type="term" value="F:exonuclease activity"/>
    <property type="evidence" value="ECO:0000318"/>
    <property type="project" value="GO_Central"/>
</dbReference>
<dbReference type="GO" id="GO:0003723">
    <property type="term" value="F:RNA binding"/>
    <property type="evidence" value="ECO:0007005"/>
    <property type="project" value="UniProtKB"/>
</dbReference>
<dbReference type="GO" id="GO:0042254">
    <property type="term" value="P:ribosome biogenesis"/>
    <property type="evidence" value="ECO:0007669"/>
    <property type="project" value="UniProtKB-KW"/>
</dbReference>
<dbReference type="GO" id="GO:0006396">
    <property type="term" value="P:RNA processing"/>
    <property type="evidence" value="ECO:0000318"/>
    <property type="project" value="GO_Central"/>
</dbReference>
<dbReference type="CDD" id="cd06149">
    <property type="entry name" value="ISG20"/>
    <property type="match status" value="1"/>
</dbReference>
<dbReference type="FunFam" id="3.30.420.10:FF:000007">
    <property type="entry name" value="Interferon-stimulated exonuclease gene 20"/>
    <property type="match status" value="1"/>
</dbReference>
<dbReference type="Gene3D" id="3.30.420.10">
    <property type="entry name" value="Ribonuclease H-like superfamily/Ribonuclease H"/>
    <property type="match status" value="1"/>
</dbReference>
<dbReference type="InterPro" id="IPR013520">
    <property type="entry name" value="Exonuclease_RNaseT/DNA_pol3"/>
</dbReference>
<dbReference type="InterPro" id="IPR037433">
    <property type="entry name" value="ISG20_DEDDh"/>
</dbReference>
<dbReference type="InterPro" id="IPR047021">
    <property type="entry name" value="REXO1/3/4-like"/>
</dbReference>
<dbReference type="InterPro" id="IPR012337">
    <property type="entry name" value="RNaseH-like_sf"/>
</dbReference>
<dbReference type="InterPro" id="IPR036397">
    <property type="entry name" value="RNaseH_sf"/>
</dbReference>
<dbReference type="PANTHER" id="PTHR12801:SF78">
    <property type="entry name" value="INTERFERON-STIMULATED 20 KDA EXONUCLEASE-LIKE 2"/>
    <property type="match status" value="1"/>
</dbReference>
<dbReference type="PANTHER" id="PTHR12801">
    <property type="entry name" value="RNA EXONUCLEASE REXO1 / RECO3 FAMILY MEMBER-RELATED"/>
    <property type="match status" value="1"/>
</dbReference>
<dbReference type="Pfam" id="PF00929">
    <property type="entry name" value="RNase_T"/>
    <property type="match status" value="1"/>
</dbReference>
<dbReference type="SMART" id="SM00479">
    <property type="entry name" value="EXOIII"/>
    <property type="match status" value="1"/>
</dbReference>
<dbReference type="SUPFAM" id="SSF53098">
    <property type="entry name" value="Ribonuclease H-like"/>
    <property type="match status" value="1"/>
</dbReference>